<sequence>MAAATGTRKKKTPRPGQWKLWLLYTAGFVPAVWTFYLGATGQLGADPVKTFEHLLGLWALRFLILTLLVTPIRDLTGITLLRYRRALGLLAFYYALMHFTTYMVLDQGLNLSAIITDIVRRPFITIGMISLALLVPLALTSNNWSIRKLGRRWSSLHKLVYIAIAGSAVHFLMSVKSWPAEPVIYAAIVAALLLWRLARPYLRTRKPALRPRGEAIALRK</sequence>
<dbReference type="EMBL" id="AM040265">
    <property type="protein sequence ID" value="CAJ12408.1"/>
    <property type="molecule type" value="Genomic_DNA"/>
</dbReference>
<dbReference type="RefSeq" id="WP_002965660.1">
    <property type="nucleotide sequence ID" value="NZ_KN046823.1"/>
</dbReference>
<dbReference type="SMR" id="Q2YIK1"/>
<dbReference type="STRING" id="359391.BAB2_0242"/>
<dbReference type="GeneID" id="93015803"/>
<dbReference type="KEGG" id="bmf:BAB2_0242"/>
<dbReference type="PATRIC" id="fig|359391.11.peg.2192"/>
<dbReference type="HOGENOM" id="CLU_080662_2_0_5"/>
<dbReference type="PhylomeDB" id="Q2YIK1"/>
<dbReference type="Proteomes" id="UP000002719">
    <property type="component" value="Chromosome II"/>
</dbReference>
<dbReference type="GO" id="GO:0005886">
    <property type="term" value="C:plasma membrane"/>
    <property type="evidence" value="ECO:0007669"/>
    <property type="project" value="UniProtKB-SubCell"/>
</dbReference>
<dbReference type="GO" id="GO:0009055">
    <property type="term" value="F:electron transfer activity"/>
    <property type="evidence" value="ECO:0007669"/>
    <property type="project" value="UniProtKB-UniRule"/>
</dbReference>
<dbReference type="GO" id="GO:0010181">
    <property type="term" value="F:FMN binding"/>
    <property type="evidence" value="ECO:0007669"/>
    <property type="project" value="UniProtKB-UniRule"/>
</dbReference>
<dbReference type="GO" id="GO:0020037">
    <property type="term" value="F:heme binding"/>
    <property type="evidence" value="ECO:0007669"/>
    <property type="project" value="UniProtKB-UniRule"/>
</dbReference>
<dbReference type="GO" id="GO:0046872">
    <property type="term" value="F:metal ion binding"/>
    <property type="evidence" value="ECO:0007669"/>
    <property type="project" value="UniProtKB-KW"/>
</dbReference>
<dbReference type="GO" id="GO:0016679">
    <property type="term" value="F:oxidoreductase activity, acting on diphenols and related substances as donors"/>
    <property type="evidence" value="ECO:0007669"/>
    <property type="project" value="TreeGrafter"/>
</dbReference>
<dbReference type="GO" id="GO:0030091">
    <property type="term" value="P:protein repair"/>
    <property type="evidence" value="ECO:0007669"/>
    <property type="project" value="UniProtKB-UniRule"/>
</dbReference>
<dbReference type="HAMAP" id="MF_01207">
    <property type="entry name" value="MsrQ"/>
    <property type="match status" value="1"/>
</dbReference>
<dbReference type="InterPro" id="IPR013130">
    <property type="entry name" value="Fe3_Rdtase_TM_dom"/>
</dbReference>
<dbReference type="InterPro" id="IPR022837">
    <property type="entry name" value="MsrQ-like"/>
</dbReference>
<dbReference type="NCBIfam" id="NF003833">
    <property type="entry name" value="PRK05419.1-5"/>
    <property type="match status" value="1"/>
</dbReference>
<dbReference type="PANTHER" id="PTHR36964">
    <property type="entry name" value="PROTEIN-METHIONINE-SULFOXIDE REDUCTASE HEME-BINDING SUBUNIT MSRQ"/>
    <property type="match status" value="1"/>
</dbReference>
<dbReference type="PANTHER" id="PTHR36964:SF1">
    <property type="entry name" value="PROTEIN-METHIONINE-SULFOXIDE REDUCTASE HEME-BINDING SUBUNIT MSRQ"/>
    <property type="match status" value="1"/>
</dbReference>
<dbReference type="Pfam" id="PF01794">
    <property type="entry name" value="Ferric_reduct"/>
    <property type="match status" value="1"/>
</dbReference>
<protein>
    <recommendedName>
        <fullName evidence="1">Protein-methionine-sulfoxide reductase heme-binding subunit MsrQ</fullName>
    </recommendedName>
    <alternativeName>
        <fullName evidence="1">Flavocytochrome MsrQ</fullName>
    </alternativeName>
</protein>
<organism>
    <name type="scientific">Brucella abortus (strain 2308)</name>
    <dbReference type="NCBI Taxonomy" id="359391"/>
    <lineage>
        <taxon>Bacteria</taxon>
        <taxon>Pseudomonadati</taxon>
        <taxon>Pseudomonadota</taxon>
        <taxon>Alphaproteobacteria</taxon>
        <taxon>Hyphomicrobiales</taxon>
        <taxon>Brucellaceae</taxon>
        <taxon>Brucella/Ochrobactrum group</taxon>
        <taxon>Brucella</taxon>
    </lineage>
</organism>
<accession>Q2YIK1</accession>
<gene>
    <name evidence="1" type="primary">msrQ</name>
    <name type="ordered locus">BAB2_0242</name>
</gene>
<reference key="1">
    <citation type="journal article" date="2005" name="Infect. Immun.">
        <title>Whole-genome analyses of speciation events in pathogenic Brucellae.</title>
        <authorList>
            <person name="Chain P.S."/>
            <person name="Comerci D.J."/>
            <person name="Tolmasky M.E."/>
            <person name="Larimer F.W."/>
            <person name="Malfatti S.A."/>
            <person name="Vergez L.M."/>
            <person name="Aguero F."/>
            <person name="Land M.L."/>
            <person name="Ugalde R.A."/>
            <person name="Garcia E."/>
        </authorList>
    </citation>
    <scope>NUCLEOTIDE SEQUENCE [LARGE SCALE GENOMIC DNA]</scope>
    <source>
        <strain>2308</strain>
    </source>
</reference>
<comment type="function">
    <text evidence="1">Part of the MsrPQ system that repairs oxidized periplasmic proteins containing methionine sulfoxide residues (Met-O), using respiratory chain electrons. Thus protects these proteins from oxidative-stress damage caused by reactive species of oxygen and chlorine generated by the host defense mechanisms. MsrPQ is essential for the maintenance of envelope integrity under bleach stress, rescuing a wide series of structurally unrelated periplasmic proteins from methionine oxidation. MsrQ provides electrons for reduction to the reductase catalytic subunit MsrP, using the quinone pool of the respiratory chain.</text>
</comment>
<comment type="cofactor">
    <cofactor evidence="1">
        <name>FMN</name>
        <dbReference type="ChEBI" id="CHEBI:58210"/>
    </cofactor>
    <text evidence="1">Binds 1 FMN per subunit.</text>
</comment>
<comment type="cofactor">
    <cofactor evidence="1">
        <name>heme b</name>
        <dbReference type="ChEBI" id="CHEBI:60344"/>
    </cofactor>
    <text evidence="1">Binds 1 heme b (iron(II)-protoporphyrin IX) group per subunit.</text>
</comment>
<comment type="subunit">
    <text evidence="1">Heterodimer of a catalytic subunit (MsrP) and a heme-binding subunit (MsrQ).</text>
</comment>
<comment type="subcellular location">
    <subcellularLocation>
        <location evidence="1">Cell inner membrane</location>
        <topology evidence="1">Multi-pass membrane protein</topology>
    </subcellularLocation>
</comment>
<comment type="similarity">
    <text evidence="1">Belongs to the MsrQ family.</text>
</comment>
<evidence type="ECO:0000255" key="1">
    <source>
        <dbReference type="HAMAP-Rule" id="MF_01207"/>
    </source>
</evidence>
<keyword id="KW-0997">Cell inner membrane</keyword>
<keyword id="KW-1003">Cell membrane</keyword>
<keyword id="KW-0249">Electron transport</keyword>
<keyword id="KW-0285">Flavoprotein</keyword>
<keyword id="KW-0288">FMN</keyword>
<keyword id="KW-0349">Heme</keyword>
<keyword id="KW-0408">Iron</keyword>
<keyword id="KW-0472">Membrane</keyword>
<keyword id="KW-0479">Metal-binding</keyword>
<keyword id="KW-1185">Reference proteome</keyword>
<keyword id="KW-0812">Transmembrane</keyword>
<keyword id="KW-1133">Transmembrane helix</keyword>
<keyword id="KW-0813">Transport</keyword>
<proteinExistence type="inferred from homology"/>
<name>MSRQ_BRUA2</name>
<feature type="chain" id="PRO_1000066168" description="Protein-methionine-sulfoxide reductase heme-binding subunit MsrQ">
    <location>
        <begin position="1"/>
        <end position="220"/>
    </location>
</feature>
<feature type="transmembrane region" description="Helical" evidence="1">
    <location>
        <begin position="20"/>
        <end position="40"/>
    </location>
</feature>
<feature type="transmembrane region" description="Helical" evidence="1">
    <location>
        <begin position="52"/>
        <end position="72"/>
    </location>
</feature>
<feature type="transmembrane region" description="Helical" evidence="1">
    <location>
        <begin position="86"/>
        <end position="106"/>
    </location>
</feature>
<feature type="transmembrane region" description="Helical" evidence="1">
    <location>
        <begin position="122"/>
        <end position="142"/>
    </location>
</feature>
<feature type="transmembrane region" description="Helical" evidence="1">
    <location>
        <begin position="153"/>
        <end position="173"/>
    </location>
</feature>
<feature type="transmembrane region" description="Helical" evidence="1">
    <location>
        <begin position="175"/>
        <end position="195"/>
    </location>
</feature>